<gene>
    <name evidence="1" type="primary">whiA</name>
    <name type="ordered locus">Amet_4088</name>
</gene>
<sequence>MSYSSNTKNELARIEGEQSCCVRAELAALIRMSGTLQLVGSQKLNIKVTTENPAIARRLFKIIKKQYNIHAEVMIRRNARLKKNNYYLLVITHSMGSSEVLADLGIMKKVDDSFDITYRIPQELTQNRCCKRAYLRGAFLGGGSVSDPEKTYHLEFVTHHKELSEGLRDLINSFDLNAKVVERKGNYVVYLKEGDQVVDLLNIVGAHSALLDLENIRVYKEMRNNVNRIVNCETANLSKTVDASIRQIQNIQYIEGSIGINRLPDNLREVAELRVEYQDATLKELGEMINPPIGKSGVNHRLRKLDQIADRERGKSI</sequence>
<comment type="function">
    <text evidence="1">Involved in cell division and chromosome segregation.</text>
</comment>
<comment type="similarity">
    <text evidence="1">Belongs to the WhiA family.</text>
</comment>
<reference key="1">
    <citation type="journal article" date="2016" name="Genome Announc.">
        <title>Complete genome sequence of Alkaliphilus metalliredigens strain QYMF, an alkaliphilic and metal-reducing bacterium isolated from borax-contaminated leachate ponds.</title>
        <authorList>
            <person name="Hwang C."/>
            <person name="Copeland A."/>
            <person name="Lucas S."/>
            <person name="Lapidus A."/>
            <person name="Barry K."/>
            <person name="Detter J.C."/>
            <person name="Glavina Del Rio T."/>
            <person name="Hammon N."/>
            <person name="Israni S."/>
            <person name="Dalin E."/>
            <person name="Tice H."/>
            <person name="Pitluck S."/>
            <person name="Chertkov O."/>
            <person name="Brettin T."/>
            <person name="Bruce D."/>
            <person name="Han C."/>
            <person name="Schmutz J."/>
            <person name="Larimer F."/>
            <person name="Land M.L."/>
            <person name="Hauser L."/>
            <person name="Kyrpides N."/>
            <person name="Mikhailova N."/>
            <person name="Ye Q."/>
            <person name="Zhou J."/>
            <person name="Richardson P."/>
            <person name="Fields M.W."/>
        </authorList>
    </citation>
    <scope>NUCLEOTIDE SEQUENCE [LARGE SCALE GENOMIC DNA]</scope>
    <source>
        <strain>QYMF</strain>
    </source>
</reference>
<evidence type="ECO:0000255" key="1">
    <source>
        <dbReference type="HAMAP-Rule" id="MF_01420"/>
    </source>
</evidence>
<keyword id="KW-0131">Cell cycle</keyword>
<keyword id="KW-0132">Cell division</keyword>
<keyword id="KW-0238">DNA-binding</keyword>
<keyword id="KW-1185">Reference proteome</keyword>
<organism>
    <name type="scientific">Alkaliphilus metalliredigens (strain QYMF)</name>
    <dbReference type="NCBI Taxonomy" id="293826"/>
    <lineage>
        <taxon>Bacteria</taxon>
        <taxon>Bacillati</taxon>
        <taxon>Bacillota</taxon>
        <taxon>Clostridia</taxon>
        <taxon>Peptostreptococcales</taxon>
        <taxon>Natronincolaceae</taxon>
        <taxon>Alkaliphilus</taxon>
    </lineage>
</organism>
<accession>A6TVF1</accession>
<protein>
    <recommendedName>
        <fullName evidence="1">Probable cell division protein WhiA</fullName>
    </recommendedName>
</protein>
<feature type="chain" id="PRO_0000376420" description="Probable cell division protein WhiA">
    <location>
        <begin position="1"/>
        <end position="317"/>
    </location>
</feature>
<feature type="DNA-binding region" description="H-T-H motif" evidence="1">
    <location>
        <begin position="281"/>
        <end position="314"/>
    </location>
</feature>
<name>WHIA_ALKMQ</name>
<dbReference type="EMBL" id="CP000724">
    <property type="protein sequence ID" value="ABR50169.1"/>
    <property type="molecule type" value="Genomic_DNA"/>
</dbReference>
<dbReference type="RefSeq" id="WP_012065117.1">
    <property type="nucleotide sequence ID" value="NC_009633.1"/>
</dbReference>
<dbReference type="SMR" id="A6TVF1"/>
<dbReference type="STRING" id="293826.Amet_4088"/>
<dbReference type="KEGG" id="amt:Amet_4088"/>
<dbReference type="eggNOG" id="COG1481">
    <property type="taxonomic scope" value="Bacteria"/>
</dbReference>
<dbReference type="HOGENOM" id="CLU_053282_0_0_9"/>
<dbReference type="OrthoDB" id="401278at2"/>
<dbReference type="Proteomes" id="UP000001572">
    <property type="component" value="Chromosome"/>
</dbReference>
<dbReference type="GO" id="GO:0003677">
    <property type="term" value="F:DNA binding"/>
    <property type="evidence" value="ECO:0007669"/>
    <property type="project" value="UniProtKB-UniRule"/>
</dbReference>
<dbReference type="GO" id="GO:0051301">
    <property type="term" value="P:cell division"/>
    <property type="evidence" value="ECO:0007669"/>
    <property type="project" value="UniProtKB-UniRule"/>
</dbReference>
<dbReference type="GO" id="GO:0043937">
    <property type="term" value="P:regulation of sporulation"/>
    <property type="evidence" value="ECO:0007669"/>
    <property type="project" value="InterPro"/>
</dbReference>
<dbReference type="Gene3D" id="3.10.28.10">
    <property type="entry name" value="Homing endonucleases"/>
    <property type="match status" value="1"/>
</dbReference>
<dbReference type="HAMAP" id="MF_01420">
    <property type="entry name" value="HTH_type_WhiA"/>
    <property type="match status" value="1"/>
</dbReference>
<dbReference type="InterPro" id="IPR027434">
    <property type="entry name" value="Homing_endonucl"/>
</dbReference>
<dbReference type="InterPro" id="IPR018478">
    <property type="entry name" value="Sporu_reg_WhiA_N_dom"/>
</dbReference>
<dbReference type="InterPro" id="IPR003802">
    <property type="entry name" value="Sporulation_regulator_WhiA"/>
</dbReference>
<dbReference type="InterPro" id="IPR023054">
    <property type="entry name" value="Sporulation_regulator_WhiA_C"/>
</dbReference>
<dbReference type="InterPro" id="IPR039518">
    <property type="entry name" value="WhiA_LAGLIDADG_dom"/>
</dbReference>
<dbReference type="NCBIfam" id="TIGR00647">
    <property type="entry name" value="DNA_bind_WhiA"/>
    <property type="match status" value="1"/>
</dbReference>
<dbReference type="PANTHER" id="PTHR37307">
    <property type="entry name" value="CELL DIVISION PROTEIN WHIA-RELATED"/>
    <property type="match status" value="1"/>
</dbReference>
<dbReference type="PANTHER" id="PTHR37307:SF1">
    <property type="entry name" value="CELL DIVISION PROTEIN WHIA-RELATED"/>
    <property type="match status" value="1"/>
</dbReference>
<dbReference type="Pfam" id="PF02650">
    <property type="entry name" value="HTH_WhiA"/>
    <property type="match status" value="1"/>
</dbReference>
<dbReference type="Pfam" id="PF14527">
    <property type="entry name" value="LAGLIDADG_WhiA"/>
    <property type="match status" value="1"/>
</dbReference>
<dbReference type="Pfam" id="PF10298">
    <property type="entry name" value="WhiA_N"/>
    <property type="match status" value="1"/>
</dbReference>
<dbReference type="SUPFAM" id="SSF55608">
    <property type="entry name" value="Homing endonucleases"/>
    <property type="match status" value="1"/>
</dbReference>
<proteinExistence type="inferred from homology"/>